<proteinExistence type="inferred from homology"/>
<dbReference type="EMBL" id="M95288">
    <property type="protein sequence ID" value="AAA27345.1"/>
    <property type="molecule type" value="Genomic_DNA"/>
</dbReference>
<dbReference type="SMR" id="Q02183"/>
<dbReference type="STRING" id="32052.WB44_13630"/>
<dbReference type="GO" id="GO:0030089">
    <property type="term" value="C:phycobilisome"/>
    <property type="evidence" value="ECO:0007669"/>
    <property type="project" value="UniProtKB-KW"/>
</dbReference>
<dbReference type="GO" id="GO:0031676">
    <property type="term" value="C:plasma membrane-derived thylakoid membrane"/>
    <property type="evidence" value="ECO:0007669"/>
    <property type="project" value="UniProtKB-SubCell"/>
</dbReference>
<dbReference type="GO" id="GO:0015979">
    <property type="term" value="P:photosynthesis"/>
    <property type="evidence" value="ECO:0007669"/>
    <property type="project" value="UniProtKB-KW"/>
</dbReference>
<dbReference type="Gene3D" id="1.10.490.20">
    <property type="entry name" value="Phycocyanins"/>
    <property type="match status" value="1"/>
</dbReference>
<dbReference type="InterPro" id="IPR009050">
    <property type="entry name" value="Globin-like_sf"/>
</dbReference>
<dbReference type="InterPro" id="IPR012128">
    <property type="entry name" value="Phycobilisome_asu/bsu"/>
</dbReference>
<dbReference type="InterPro" id="IPR038719">
    <property type="entry name" value="Phycobilisome_asu/bsu_sf"/>
</dbReference>
<dbReference type="InterPro" id="IPR006247">
    <property type="entry name" value="Phycocyanin_b"/>
</dbReference>
<dbReference type="NCBIfam" id="TIGR01339">
    <property type="entry name" value="phycocy_beta"/>
    <property type="match status" value="1"/>
</dbReference>
<dbReference type="PANTHER" id="PTHR34011:SF7">
    <property type="entry name" value="C-PHYCOCYANIN BETA SUBUNIT"/>
    <property type="match status" value="1"/>
</dbReference>
<dbReference type="PANTHER" id="PTHR34011">
    <property type="entry name" value="PHYCOBILISOME 32.1 KDA LINKER POLYPEPTIDE, PHYCOCYANIN-ASSOCIATED, ROD 2-RELATED"/>
    <property type="match status" value="1"/>
</dbReference>
<dbReference type="Pfam" id="PF00502">
    <property type="entry name" value="Phycobilisome"/>
    <property type="match status" value="1"/>
</dbReference>
<dbReference type="PIRSF" id="PIRSF000081">
    <property type="entry name" value="Phycocyanin"/>
    <property type="match status" value="1"/>
</dbReference>
<dbReference type="SUPFAM" id="SSF46458">
    <property type="entry name" value="Globin-like"/>
    <property type="match status" value="1"/>
</dbReference>
<keyword id="KW-0042">Antenna complex</keyword>
<keyword id="KW-0089">Bile pigment</keyword>
<keyword id="KW-0157">Chromophore</keyword>
<keyword id="KW-0249">Electron transport</keyword>
<keyword id="KW-0472">Membrane</keyword>
<keyword id="KW-0488">Methylation</keyword>
<keyword id="KW-0602">Photosynthesis</keyword>
<keyword id="KW-0605">Phycobilisome</keyword>
<keyword id="KW-0793">Thylakoid</keyword>
<keyword id="KW-0813">Transport</keyword>
<name>PHRB_SYNPY</name>
<accession>Q02183</accession>
<reference key="1">
    <citation type="journal article" date="1993" name="Plant Mol. Biol.">
        <title>Genes of the R-phycocyanin II locus of marine Synechococcus spp., and comparison of protein-chromophore interactions in phycocyanins differing in bilin composition.</title>
        <authorList>
            <person name="de Lorimier R."/>
            <person name="Wilbanks S.M."/>
            <person name="Glazer A.N."/>
        </authorList>
    </citation>
    <scope>NUCLEOTIDE SEQUENCE [GENOMIC DNA]</scope>
</reference>
<comment type="function">
    <text>Light-harvesting photosynthetic bile pigment-protein from the phycobiliprotein complex.</text>
</comment>
<comment type="subunit">
    <text evidence="1">Heterodimer of an alpha and a beta chain.</text>
</comment>
<comment type="subcellular location">
    <subcellularLocation>
        <location evidence="1">Cellular thylakoid membrane</location>
        <topology evidence="1">Peripheral membrane protein</topology>
        <orientation evidence="1">Cytoplasmic side</orientation>
    </subcellularLocation>
    <text evidence="1">Part of the phycobilisome rod.</text>
</comment>
<comment type="PTM">
    <text evidence="1">Contains two covalently linked bilin chromophores.</text>
</comment>
<comment type="similarity">
    <text evidence="2">Belongs to the phycobiliprotein family.</text>
</comment>
<feature type="initiator methionine" description="Removed" evidence="1">
    <location>
        <position position="1"/>
    </location>
</feature>
<feature type="chain" id="PRO_0000199167" description="R-phycocyanin-2 beta chain">
    <location>
        <begin position="2"/>
        <end position="172"/>
    </location>
</feature>
<feature type="binding site" description="covalent" evidence="1">
    <location>
        <position position="82"/>
    </location>
    <ligand>
        <name>(2R,3E)-phycocyanobilin</name>
        <dbReference type="ChEBI" id="CHEBI:85275"/>
    </ligand>
</feature>
<feature type="binding site" description="covalent" evidence="1">
    <location>
        <position position="153"/>
    </location>
    <ligand>
        <name>(2R,3E)-phycoerythrobilin</name>
        <dbReference type="ChEBI" id="CHEBI:85276"/>
    </ligand>
</feature>
<feature type="modified residue" description="N4-methylasparagine" evidence="1">
    <location>
        <position position="72"/>
    </location>
</feature>
<organism>
    <name type="scientific">Synechococcus sp. (strain WH8020)</name>
    <dbReference type="NCBI Taxonomy" id="32052"/>
    <lineage>
        <taxon>Bacteria</taxon>
        <taxon>Bacillati</taxon>
        <taxon>Cyanobacteriota</taxon>
        <taxon>Cyanophyceae</taxon>
        <taxon>Synechococcales</taxon>
        <taxon>Synechococcaceae</taxon>
        <taxon>Synechococcus</taxon>
    </lineage>
</organism>
<protein>
    <recommendedName>
        <fullName>R-phycocyanin-2 beta chain</fullName>
    </recommendedName>
    <alternativeName>
        <fullName>R-phycocyanin II beta chain</fullName>
    </alternativeName>
</protein>
<evidence type="ECO:0000250" key="1"/>
<evidence type="ECO:0000305" key="2"/>
<gene>
    <name type="primary">rpcB</name>
</gene>
<sequence length="172" mass="18056">MFDAFTKVVAQADARGQFISTSEIDALAAMVSGRNKRLDAVSRISNNASTIVASAARELFAQQPALISPGGNAYTSRRMAACLRDMEIILRYVTYSAFTGDASVLEDRCLNGLRETYLALGTPGTSVAAGVNLMKDAALSIVNDRAGISNGDCASLSSEIGTYFDRAAASVA</sequence>